<protein>
    <recommendedName>
        <fullName evidence="1">Methylthioribose-1-phosphate isomerase</fullName>
        <shortName evidence="1">M1Pi</shortName>
        <shortName evidence="1">MTR-1-P isomerase</shortName>
        <ecNumber evidence="1">5.3.1.23</ecNumber>
    </recommendedName>
    <alternativeName>
        <fullName evidence="1">S-methyl-5-thioribose-1-phosphate isomerase</fullName>
    </alternativeName>
</protein>
<feature type="chain" id="PRO_0000357269" description="Methylthioribose-1-phosphate isomerase">
    <location>
        <begin position="1"/>
        <end position="354"/>
    </location>
</feature>
<feature type="active site" description="Proton donor" evidence="1">
    <location>
        <position position="245"/>
    </location>
</feature>
<feature type="binding site" evidence="1">
    <location>
        <begin position="58"/>
        <end position="60"/>
    </location>
    <ligand>
        <name>substrate</name>
    </ligand>
</feature>
<feature type="binding site" evidence="1">
    <location>
        <position position="101"/>
    </location>
    <ligand>
        <name>substrate</name>
    </ligand>
</feature>
<feature type="binding site" evidence="1">
    <location>
        <position position="204"/>
    </location>
    <ligand>
        <name>substrate</name>
    </ligand>
</feature>
<feature type="binding site" evidence="1">
    <location>
        <begin position="255"/>
        <end position="256"/>
    </location>
    <ligand>
        <name>substrate</name>
    </ligand>
</feature>
<feature type="site" description="Transition state stabilizer" evidence="1">
    <location>
        <position position="165"/>
    </location>
</feature>
<proteinExistence type="inferred from homology"/>
<reference key="1">
    <citation type="journal article" date="2005" name="Genome Res.">
        <title>Comparative and functional genomic analyses of the pathogenicity of phytopathogen Xanthomonas campestris pv. campestris.</title>
        <authorList>
            <person name="Qian W."/>
            <person name="Jia Y."/>
            <person name="Ren S.-X."/>
            <person name="He Y.-Q."/>
            <person name="Feng J.-X."/>
            <person name="Lu L.-F."/>
            <person name="Sun Q."/>
            <person name="Ying G."/>
            <person name="Tang D.-J."/>
            <person name="Tang H."/>
            <person name="Wu W."/>
            <person name="Hao P."/>
            <person name="Wang L."/>
            <person name="Jiang B.-L."/>
            <person name="Zeng S."/>
            <person name="Gu W.-Y."/>
            <person name="Lu G."/>
            <person name="Rong L."/>
            <person name="Tian Y."/>
            <person name="Yao Z."/>
            <person name="Fu G."/>
            <person name="Chen B."/>
            <person name="Fang R."/>
            <person name="Qiang B."/>
            <person name="Chen Z."/>
            <person name="Zhao G.-P."/>
            <person name="Tang J.-L."/>
            <person name="He C."/>
        </authorList>
    </citation>
    <scope>NUCLEOTIDE SEQUENCE [LARGE SCALE GENOMIC DNA]</scope>
    <source>
        <strain>8004</strain>
    </source>
</reference>
<dbReference type="EC" id="5.3.1.23" evidence="1"/>
<dbReference type="EMBL" id="CP000050">
    <property type="protein sequence ID" value="AAY49710.1"/>
    <property type="molecule type" value="Genomic_DNA"/>
</dbReference>
<dbReference type="RefSeq" id="WP_011036755.1">
    <property type="nucleotide sequence ID" value="NZ_CP155948.1"/>
</dbReference>
<dbReference type="SMR" id="Q4UTB3"/>
<dbReference type="KEGG" id="xcb:XC_2661"/>
<dbReference type="HOGENOM" id="CLU_016218_1_2_6"/>
<dbReference type="UniPathway" id="UPA00904">
    <property type="reaction ID" value="UER00874"/>
</dbReference>
<dbReference type="Proteomes" id="UP000000420">
    <property type="component" value="Chromosome"/>
</dbReference>
<dbReference type="GO" id="GO:0046523">
    <property type="term" value="F:S-methyl-5-thioribose-1-phosphate isomerase activity"/>
    <property type="evidence" value="ECO:0007669"/>
    <property type="project" value="UniProtKB-UniRule"/>
</dbReference>
<dbReference type="GO" id="GO:0019509">
    <property type="term" value="P:L-methionine salvage from methylthioadenosine"/>
    <property type="evidence" value="ECO:0007669"/>
    <property type="project" value="UniProtKB-UniRule"/>
</dbReference>
<dbReference type="FunFam" id="1.20.120.420:FF:000007">
    <property type="entry name" value="Methylthioribose-1-phosphate isomerase"/>
    <property type="match status" value="1"/>
</dbReference>
<dbReference type="FunFam" id="3.40.50.10470:FF:000006">
    <property type="entry name" value="Methylthioribose-1-phosphate isomerase"/>
    <property type="match status" value="1"/>
</dbReference>
<dbReference type="Gene3D" id="1.20.120.420">
    <property type="entry name" value="translation initiation factor eif-2b, domain 1"/>
    <property type="match status" value="1"/>
</dbReference>
<dbReference type="Gene3D" id="3.40.50.10470">
    <property type="entry name" value="Translation initiation factor eif-2b, domain 2"/>
    <property type="match status" value="1"/>
</dbReference>
<dbReference type="HAMAP" id="MF_01678">
    <property type="entry name" value="Salvage_MtnA"/>
    <property type="match status" value="1"/>
</dbReference>
<dbReference type="InterPro" id="IPR000649">
    <property type="entry name" value="IF-2B-related"/>
</dbReference>
<dbReference type="InterPro" id="IPR005251">
    <property type="entry name" value="IF-M1Pi"/>
</dbReference>
<dbReference type="InterPro" id="IPR042529">
    <property type="entry name" value="IF_2B-like_C"/>
</dbReference>
<dbReference type="InterPro" id="IPR011559">
    <property type="entry name" value="Initiation_fac_2B_a/b/d"/>
</dbReference>
<dbReference type="InterPro" id="IPR027363">
    <property type="entry name" value="M1Pi_N"/>
</dbReference>
<dbReference type="InterPro" id="IPR037171">
    <property type="entry name" value="NagB/RpiA_transferase-like"/>
</dbReference>
<dbReference type="NCBIfam" id="TIGR00524">
    <property type="entry name" value="eIF-2B_rel"/>
    <property type="match status" value="1"/>
</dbReference>
<dbReference type="NCBIfam" id="NF004326">
    <property type="entry name" value="PRK05720.1"/>
    <property type="match status" value="1"/>
</dbReference>
<dbReference type="NCBIfam" id="TIGR00512">
    <property type="entry name" value="salvage_mtnA"/>
    <property type="match status" value="1"/>
</dbReference>
<dbReference type="PANTHER" id="PTHR43475">
    <property type="entry name" value="METHYLTHIORIBOSE-1-PHOSPHATE ISOMERASE"/>
    <property type="match status" value="1"/>
</dbReference>
<dbReference type="PANTHER" id="PTHR43475:SF1">
    <property type="entry name" value="METHYLTHIORIBOSE-1-PHOSPHATE ISOMERASE"/>
    <property type="match status" value="1"/>
</dbReference>
<dbReference type="Pfam" id="PF01008">
    <property type="entry name" value="IF-2B"/>
    <property type="match status" value="1"/>
</dbReference>
<dbReference type="SUPFAM" id="SSF100950">
    <property type="entry name" value="NagB/RpiA/CoA transferase-like"/>
    <property type="match status" value="1"/>
</dbReference>
<evidence type="ECO:0000255" key="1">
    <source>
        <dbReference type="HAMAP-Rule" id="MF_01678"/>
    </source>
</evidence>
<evidence type="ECO:0000305" key="2"/>
<accession>Q4UTB3</accession>
<gene>
    <name evidence="1" type="primary">mtnA</name>
    <name type="ordered locus">XC_2661</name>
</gene>
<keyword id="KW-0028">Amino-acid biosynthesis</keyword>
<keyword id="KW-0413">Isomerase</keyword>
<keyword id="KW-0486">Methionine biosynthesis</keyword>
<sequence length="354" mass="37410">MNDSAHIDYARYDHIRPLLWTGDALELLDQRKLPFVVEHVRCDSSDAVAEAIHSLAVRGAPAIGIAAGWGVVLAAREIAADSGSEALQKLEPALLRLNAARPTAVNLAWALMRMRRVLAAAGPDWRDVLAREAQAIADEDLAANRHMGALGAGLIAPGSGVLTHCNTGSLATAGFGTALGVIRAGMAQQRISKVFAGETRPWLQGARLTVWELQQDGIDATLIADSAASHLMKSGLVQWVIVGADRICANGDTANKIGSYQLAIAARHHGVKFMVVAPSSTVDMATADGDQIEIEQRDPGELFGVGGVRTVADGIHAWNPVFDVTPGHLIDAIVTERGVIAQPDLARMQAAFGN</sequence>
<name>MTNA_XANC8</name>
<organism>
    <name type="scientific">Xanthomonas campestris pv. campestris (strain 8004)</name>
    <dbReference type="NCBI Taxonomy" id="314565"/>
    <lineage>
        <taxon>Bacteria</taxon>
        <taxon>Pseudomonadati</taxon>
        <taxon>Pseudomonadota</taxon>
        <taxon>Gammaproteobacteria</taxon>
        <taxon>Lysobacterales</taxon>
        <taxon>Lysobacteraceae</taxon>
        <taxon>Xanthomonas</taxon>
    </lineage>
</organism>
<comment type="function">
    <text evidence="1">Catalyzes the interconversion of methylthioribose-1-phosphate (MTR-1-P) into methylthioribulose-1-phosphate (MTRu-1-P).</text>
</comment>
<comment type="catalytic activity">
    <reaction evidence="1">
        <text>5-(methylsulfanyl)-alpha-D-ribose 1-phosphate = 5-(methylsulfanyl)-D-ribulose 1-phosphate</text>
        <dbReference type="Rhea" id="RHEA:19989"/>
        <dbReference type="ChEBI" id="CHEBI:58533"/>
        <dbReference type="ChEBI" id="CHEBI:58548"/>
        <dbReference type="EC" id="5.3.1.23"/>
    </reaction>
</comment>
<comment type="pathway">
    <text evidence="1">Amino-acid biosynthesis; L-methionine biosynthesis via salvage pathway; L-methionine from S-methyl-5-thio-alpha-D-ribose 1-phosphate: step 1/6.</text>
</comment>
<comment type="similarity">
    <text evidence="2">Belongs to the eIF-2B alpha/beta/delta subunits family. MtnA subfamily.</text>
</comment>